<feature type="chain" id="PRO_0000112752" description="Acetylornithine aminotransferase">
    <location>
        <begin position="1"/>
        <end position="384"/>
    </location>
</feature>
<feature type="binding site" evidence="1">
    <location>
        <begin position="94"/>
        <end position="95"/>
    </location>
    <ligand>
        <name>pyridoxal 5'-phosphate</name>
        <dbReference type="ChEBI" id="CHEBI:597326"/>
    </ligand>
</feature>
<feature type="binding site" evidence="1">
    <location>
        <position position="121"/>
    </location>
    <ligand>
        <name>pyridoxal 5'-phosphate</name>
        <dbReference type="ChEBI" id="CHEBI:597326"/>
    </ligand>
</feature>
<feature type="binding site" evidence="1">
    <location>
        <position position="124"/>
    </location>
    <ligand>
        <name>N(2)-acetyl-L-ornithine</name>
        <dbReference type="ChEBI" id="CHEBI:57805"/>
    </ligand>
</feature>
<feature type="binding site" evidence="1">
    <location>
        <begin position="206"/>
        <end position="209"/>
    </location>
    <ligand>
        <name>pyridoxal 5'-phosphate</name>
        <dbReference type="ChEBI" id="CHEBI:597326"/>
    </ligand>
</feature>
<feature type="binding site" evidence="1">
    <location>
        <position position="263"/>
    </location>
    <ligand>
        <name>N(2)-acetyl-L-ornithine</name>
        <dbReference type="ChEBI" id="CHEBI:57805"/>
    </ligand>
</feature>
<feature type="binding site" evidence="1">
    <location>
        <position position="264"/>
    </location>
    <ligand>
        <name>pyridoxal 5'-phosphate</name>
        <dbReference type="ChEBI" id="CHEBI:597326"/>
    </ligand>
</feature>
<feature type="modified residue" description="N6-(pyridoxal phosphate)lysine" evidence="1">
    <location>
        <position position="235"/>
    </location>
</feature>
<protein>
    <recommendedName>
        <fullName evidence="1">Acetylornithine aminotransferase</fullName>
        <shortName evidence="1">ACOAT</shortName>
        <ecNumber evidence="1">2.6.1.11</ecNumber>
    </recommendedName>
</protein>
<sequence length="384" mass="41336">MKHVFPTYNRFPVDIVKGNGTVVKDATGKTYLDFTSGIAVCNLGHCPENVTEAIQSQLANIWHTSNLYECALQDSVAELITDGTDKLVFFCNSGTEANEAALKLARKYTGKEKIITFEKSFHGRTFGSMSATGQAKIHQGFGRLVPGFTYVPYNDIESFKTELDENTAAVMLEVIQGEGGVIPGNAAWLMEVQMLCKKAGALLIIDEVQTGLGRTGTLFGFQQTFLDPDIFTLAKGLGNGLPIGAMVGKEHLSSAFGPGSHGSTFGGNKLALAAAKEILLTMKQTGFLEEVNAKAAYFRNLLEEHFEQLENVVAIRGEGFLIGIELGSSAAPVVTELRDKGLLILTAGPNILRILPPLTVSYAEIDQAISILKSVLEKQLIGSE</sequence>
<organism>
    <name type="scientific">Listeria innocua serovar 6a (strain ATCC BAA-680 / CLIP 11262)</name>
    <dbReference type="NCBI Taxonomy" id="272626"/>
    <lineage>
        <taxon>Bacteria</taxon>
        <taxon>Bacillati</taxon>
        <taxon>Bacillota</taxon>
        <taxon>Bacilli</taxon>
        <taxon>Bacillales</taxon>
        <taxon>Listeriaceae</taxon>
        <taxon>Listeria</taxon>
    </lineage>
</organism>
<keyword id="KW-0028">Amino-acid biosynthesis</keyword>
<keyword id="KW-0032">Aminotransferase</keyword>
<keyword id="KW-0055">Arginine biosynthesis</keyword>
<keyword id="KW-0963">Cytoplasm</keyword>
<keyword id="KW-0663">Pyridoxal phosphate</keyword>
<keyword id="KW-0808">Transferase</keyword>
<comment type="catalytic activity">
    <reaction evidence="1">
        <text>N(2)-acetyl-L-ornithine + 2-oxoglutarate = N-acetyl-L-glutamate 5-semialdehyde + L-glutamate</text>
        <dbReference type="Rhea" id="RHEA:18049"/>
        <dbReference type="ChEBI" id="CHEBI:16810"/>
        <dbReference type="ChEBI" id="CHEBI:29123"/>
        <dbReference type="ChEBI" id="CHEBI:29985"/>
        <dbReference type="ChEBI" id="CHEBI:57805"/>
        <dbReference type="EC" id="2.6.1.11"/>
    </reaction>
</comment>
<comment type="cofactor">
    <cofactor evidence="1">
        <name>pyridoxal 5'-phosphate</name>
        <dbReference type="ChEBI" id="CHEBI:597326"/>
    </cofactor>
    <text evidence="1">Binds 1 pyridoxal phosphate per subunit.</text>
</comment>
<comment type="pathway">
    <text evidence="1">Amino-acid biosynthesis; L-arginine biosynthesis; N(2)-acetyl-L-ornithine from L-glutamate: step 4/4.</text>
</comment>
<comment type="subunit">
    <text evidence="1">Homodimer.</text>
</comment>
<comment type="subcellular location">
    <subcellularLocation>
        <location evidence="1">Cytoplasm</location>
    </subcellularLocation>
</comment>
<comment type="miscellaneous">
    <text evidence="1">May also have succinyldiaminopimelate aminotransferase activity, thus carrying out the corresponding step in lysine biosynthesis.</text>
</comment>
<comment type="similarity">
    <text evidence="1">Belongs to the class-III pyridoxal-phosphate-dependent aminotransferase family. ArgD subfamily.</text>
</comment>
<reference key="1">
    <citation type="journal article" date="2001" name="Science">
        <title>Comparative genomics of Listeria species.</title>
        <authorList>
            <person name="Glaser P."/>
            <person name="Frangeul L."/>
            <person name="Buchrieser C."/>
            <person name="Rusniok C."/>
            <person name="Amend A."/>
            <person name="Baquero F."/>
            <person name="Berche P."/>
            <person name="Bloecker H."/>
            <person name="Brandt P."/>
            <person name="Chakraborty T."/>
            <person name="Charbit A."/>
            <person name="Chetouani F."/>
            <person name="Couve E."/>
            <person name="de Daruvar A."/>
            <person name="Dehoux P."/>
            <person name="Domann E."/>
            <person name="Dominguez-Bernal G."/>
            <person name="Duchaud E."/>
            <person name="Durant L."/>
            <person name="Dussurget O."/>
            <person name="Entian K.-D."/>
            <person name="Fsihi H."/>
            <person name="Garcia-del Portillo F."/>
            <person name="Garrido P."/>
            <person name="Gautier L."/>
            <person name="Goebel W."/>
            <person name="Gomez-Lopez N."/>
            <person name="Hain T."/>
            <person name="Hauf J."/>
            <person name="Jackson D."/>
            <person name="Jones L.-M."/>
            <person name="Kaerst U."/>
            <person name="Kreft J."/>
            <person name="Kuhn M."/>
            <person name="Kunst F."/>
            <person name="Kurapkat G."/>
            <person name="Madueno E."/>
            <person name="Maitournam A."/>
            <person name="Mata Vicente J."/>
            <person name="Ng E."/>
            <person name="Nedjari H."/>
            <person name="Nordsiek G."/>
            <person name="Novella S."/>
            <person name="de Pablos B."/>
            <person name="Perez-Diaz J.-C."/>
            <person name="Purcell R."/>
            <person name="Remmel B."/>
            <person name="Rose M."/>
            <person name="Schlueter T."/>
            <person name="Simoes N."/>
            <person name="Tierrez A."/>
            <person name="Vazquez-Boland J.-A."/>
            <person name="Voss H."/>
            <person name="Wehland J."/>
            <person name="Cossart P."/>
        </authorList>
    </citation>
    <scope>NUCLEOTIDE SEQUENCE [LARGE SCALE GENOMIC DNA]</scope>
    <source>
        <strain>ATCC BAA-680 / CLIP 11262</strain>
    </source>
</reference>
<dbReference type="EC" id="2.6.1.11" evidence="1"/>
<dbReference type="EMBL" id="AL596169">
    <property type="protein sequence ID" value="CAC96861.1"/>
    <property type="molecule type" value="Genomic_DNA"/>
</dbReference>
<dbReference type="PIR" id="AE1636">
    <property type="entry name" value="AE1636"/>
</dbReference>
<dbReference type="RefSeq" id="WP_010991621.1">
    <property type="nucleotide sequence ID" value="NC_003212.1"/>
</dbReference>
<dbReference type="SMR" id="Q92BC0"/>
<dbReference type="STRING" id="272626.gene:17565961"/>
<dbReference type="GeneID" id="93235012"/>
<dbReference type="KEGG" id="lin:argD"/>
<dbReference type="eggNOG" id="COG4992">
    <property type="taxonomic scope" value="Bacteria"/>
</dbReference>
<dbReference type="HOGENOM" id="CLU_016922_10_1_9"/>
<dbReference type="OrthoDB" id="9807885at2"/>
<dbReference type="UniPathway" id="UPA00068">
    <property type="reaction ID" value="UER00109"/>
</dbReference>
<dbReference type="Proteomes" id="UP000002513">
    <property type="component" value="Chromosome"/>
</dbReference>
<dbReference type="GO" id="GO:0005737">
    <property type="term" value="C:cytoplasm"/>
    <property type="evidence" value="ECO:0007669"/>
    <property type="project" value="UniProtKB-SubCell"/>
</dbReference>
<dbReference type="GO" id="GO:0042802">
    <property type="term" value="F:identical protein binding"/>
    <property type="evidence" value="ECO:0007669"/>
    <property type="project" value="TreeGrafter"/>
</dbReference>
<dbReference type="GO" id="GO:0003992">
    <property type="term" value="F:N2-acetyl-L-ornithine:2-oxoglutarate 5-aminotransferase activity"/>
    <property type="evidence" value="ECO:0007669"/>
    <property type="project" value="UniProtKB-UniRule"/>
</dbReference>
<dbReference type="GO" id="GO:0030170">
    <property type="term" value="F:pyridoxal phosphate binding"/>
    <property type="evidence" value="ECO:0007669"/>
    <property type="project" value="InterPro"/>
</dbReference>
<dbReference type="GO" id="GO:0006526">
    <property type="term" value="P:L-arginine biosynthetic process"/>
    <property type="evidence" value="ECO:0007669"/>
    <property type="project" value="UniProtKB-UniRule"/>
</dbReference>
<dbReference type="CDD" id="cd00610">
    <property type="entry name" value="OAT_like"/>
    <property type="match status" value="1"/>
</dbReference>
<dbReference type="FunFam" id="3.40.640.10:FF:000004">
    <property type="entry name" value="Acetylornithine aminotransferase"/>
    <property type="match status" value="1"/>
</dbReference>
<dbReference type="Gene3D" id="3.90.1150.10">
    <property type="entry name" value="Aspartate Aminotransferase, domain 1"/>
    <property type="match status" value="1"/>
</dbReference>
<dbReference type="Gene3D" id="3.40.640.10">
    <property type="entry name" value="Type I PLP-dependent aspartate aminotransferase-like (Major domain)"/>
    <property type="match status" value="1"/>
</dbReference>
<dbReference type="HAMAP" id="MF_01107">
    <property type="entry name" value="ArgD_aminotrans_3"/>
    <property type="match status" value="1"/>
</dbReference>
<dbReference type="InterPro" id="IPR004636">
    <property type="entry name" value="AcOrn/SuccOrn_fam"/>
</dbReference>
<dbReference type="InterPro" id="IPR005814">
    <property type="entry name" value="Aminotrans_3"/>
</dbReference>
<dbReference type="InterPro" id="IPR049704">
    <property type="entry name" value="Aminotrans_3_PPA_site"/>
</dbReference>
<dbReference type="InterPro" id="IPR050103">
    <property type="entry name" value="Class-III_PLP-dep_AT"/>
</dbReference>
<dbReference type="InterPro" id="IPR015424">
    <property type="entry name" value="PyrdxlP-dep_Trfase"/>
</dbReference>
<dbReference type="InterPro" id="IPR015421">
    <property type="entry name" value="PyrdxlP-dep_Trfase_major"/>
</dbReference>
<dbReference type="InterPro" id="IPR015422">
    <property type="entry name" value="PyrdxlP-dep_Trfase_small"/>
</dbReference>
<dbReference type="NCBIfam" id="TIGR00707">
    <property type="entry name" value="argD"/>
    <property type="match status" value="1"/>
</dbReference>
<dbReference type="NCBIfam" id="NF002325">
    <property type="entry name" value="PRK01278.1"/>
    <property type="match status" value="1"/>
</dbReference>
<dbReference type="NCBIfam" id="NF002797">
    <property type="entry name" value="PRK02936.1"/>
    <property type="match status" value="1"/>
</dbReference>
<dbReference type="PANTHER" id="PTHR11986:SF79">
    <property type="entry name" value="ACETYLORNITHINE AMINOTRANSFERASE, MITOCHONDRIAL"/>
    <property type="match status" value="1"/>
</dbReference>
<dbReference type="PANTHER" id="PTHR11986">
    <property type="entry name" value="AMINOTRANSFERASE CLASS III"/>
    <property type="match status" value="1"/>
</dbReference>
<dbReference type="Pfam" id="PF00202">
    <property type="entry name" value="Aminotran_3"/>
    <property type="match status" value="1"/>
</dbReference>
<dbReference type="PIRSF" id="PIRSF000521">
    <property type="entry name" value="Transaminase_4ab_Lys_Orn"/>
    <property type="match status" value="1"/>
</dbReference>
<dbReference type="SUPFAM" id="SSF53383">
    <property type="entry name" value="PLP-dependent transferases"/>
    <property type="match status" value="1"/>
</dbReference>
<dbReference type="PROSITE" id="PS00600">
    <property type="entry name" value="AA_TRANSFER_CLASS_3"/>
    <property type="match status" value="1"/>
</dbReference>
<proteinExistence type="inferred from homology"/>
<accession>Q92BC0</accession>
<name>ARGD_LISIN</name>
<gene>
    <name evidence="1" type="primary">argD</name>
    <name type="ordered locus">lin1630</name>
</gene>
<evidence type="ECO:0000255" key="1">
    <source>
        <dbReference type="HAMAP-Rule" id="MF_01107"/>
    </source>
</evidence>